<sequence length="853" mass="95132">MSTIDNLDAHTPMMQQYLKLKAQHPEILLFYRMGDFYELFYDDARRASQLLDISLTKRGASAGEPIPMAGIPHHAVENYLAKLVNQGESVAICEQIGDPATSKGPVERKVVRIVTPGTISDEALLQERQDNLLAAIWQDSKGYGYATLDISSGRFRLSEPVDRETMAAELQRTNPAELLYAEDFAEMALIDGRRGLRRRPLWEFEIDTARQQLNLQFGTRDLIGFGVENAPRGLCAAGCLLQYVKDTQRTSLPHIRSITMERQQDSIIMDAATRRNLEITQNLAGGVDNTLASVLDCTVTPMGSRMLKRWLHMPVRDTKTLIERQQTIGALQDVTSELQPVLRQVGDLERILARLALRTARPRDLARMRHAFQQLPELRAQLETVTSAPVQNLREKMGEFTELRDLLERAIIDAPPVLVRDGGVIAPGYNEELDEWRALADGATDYLDRLEIRERERTGLDTLKVGFNAVHGYYIQISRGQSHLAPINYVRRQTLKNAERYIIPELKEYEDKVLTSKGKALALEKQLYDELFDLLLPHLAELQQSANALAELDVLVNLAERAYTLNYTCPTFSDKPGIRITEGRHPVVEQVLNEPFIANPLNLSPQRRMLIITGPNMGGKSTYMRQTALIALLAYIGSYVPAQSVEIGPIDRIFTRVGAADDLASGRSTFMVEMTETANILHNATENSLVLMDEIGRGTSTYDGLSLAWACAENLANKIKALTLFATHYFELTQLPEKMEGVANVHLDALEHGDTIAFMHSVQDGAASKSYGLAVAALAGVPKEVIKRARQKLRELESLSPNAAATQVDGTQMSLLSVAEETSPAVEALENLDPDSLTPRQALEWIYRLKSLV</sequence>
<reference key="1">
    <citation type="submission" date="2007-08" db="EMBL/GenBank/DDBJ databases">
        <authorList>
            <consortium name="The Citrobacter koseri Genome Sequencing Project"/>
            <person name="McClelland M."/>
            <person name="Sanderson E.K."/>
            <person name="Porwollik S."/>
            <person name="Spieth J."/>
            <person name="Clifton W.S."/>
            <person name="Latreille P."/>
            <person name="Courtney L."/>
            <person name="Wang C."/>
            <person name="Pepin K."/>
            <person name="Bhonagiri V."/>
            <person name="Nash W."/>
            <person name="Johnson M."/>
            <person name="Thiruvilangam P."/>
            <person name="Wilson R."/>
        </authorList>
    </citation>
    <scope>NUCLEOTIDE SEQUENCE [LARGE SCALE GENOMIC DNA]</scope>
    <source>
        <strain>ATCC BAA-895 / CDC 4225-83 / SGSC4696</strain>
    </source>
</reference>
<keyword id="KW-0067">ATP-binding</keyword>
<keyword id="KW-0227">DNA damage</keyword>
<keyword id="KW-0234">DNA repair</keyword>
<keyword id="KW-0238">DNA-binding</keyword>
<keyword id="KW-0547">Nucleotide-binding</keyword>
<keyword id="KW-1185">Reference proteome</keyword>
<dbReference type="EMBL" id="CP000822">
    <property type="protein sequence ID" value="ABV15161.1"/>
    <property type="molecule type" value="Genomic_DNA"/>
</dbReference>
<dbReference type="RefSeq" id="WP_012134851.1">
    <property type="nucleotide sequence ID" value="NC_009792.1"/>
</dbReference>
<dbReference type="SMR" id="A8ANU8"/>
<dbReference type="STRING" id="290338.CKO_04095"/>
<dbReference type="GeneID" id="45137734"/>
<dbReference type="KEGG" id="cko:CKO_04095"/>
<dbReference type="HOGENOM" id="CLU_002472_4_0_6"/>
<dbReference type="OrthoDB" id="9802448at2"/>
<dbReference type="Proteomes" id="UP000008148">
    <property type="component" value="Chromosome"/>
</dbReference>
<dbReference type="GO" id="GO:0005829">
    <property type="term" value="C:cytosol"/>
    <property type="evidence" value="ECO:0007669"/>
    <property type="project" value="TreeGrafter"/>
</dbReference>
<dbReference type="GO" id="GO:0005524">
    <property type="term" value="F:ATP binding"/>
    <property type="evidence" value="ECO:0007669"/>
    <property type="project" value="UniProtKB-UniRule"/>
</dbReference>
<dbReference type="GO" id="GO:0140664">
    <property type="term" value="F:ATP-dependent DNA damage sensor activity"/>
    <property type="evidence" value="ECO:0007669"/>
    <property type="project" value="InterPro"/>
</dbReference>
<dbReference type="GO" id="GO:0003684">
    <property type="term" value="F:damaged DNA binding"/>
    <property type="evidence" value="ECO:0007669"/>
    <property type="project" value="UniProtKB-UniRule"/>
</dbReference>
<dbReference type="GO" id="GO:0030983">
    <property type="term" value="F:mismatched DNA binding"/>
    <property type="evidence" value="ECO:0007669"/>
    <property type="project" value="InterPro"/>
</dbReference>
<dbReference type="GO" id="GO:0006298">
    <property type="term" value="P:mismatch repair"/>
    <property type="evidence" value="ECO:0007669"/>
    <property type="project" value="UniProtKB-UniRule"/>
</dbReference>
<dbReference type="CDD" id="cd03284">
    <property type="entry name" value="ABC_MutS1"/>
    <property type="match status" value="1"/>
</dbReference>
<dbReference type="FunFam" id="1.10.1420.10:FF:000002">
    <property type="entry name" value="DNA mismatch repair protein MutS"/>
    <property type="match status" value="1"/>
</dbReference>
<dbReference type="FunFam" id="3.30.420.110:FF:000001">
    <property type="entry name" value="DNA mismatch repair protein MutS"/>
    <property type="match status" value="1"/>
</dbReference>
<dbReference type="FunFam" id="3.40.1170.10:FF:000001">
    <property type="entry name" value="DNA mismatch repair protein MutS"/>
    <property type="match status" value="1"/>
</dbReference>
<dbReference type="FunFam" id="3.40.50.300:FF:000283">
    <property type="entry name" value="DNA mismatch repair protein MutS"/>
    <property type="match status" value="1"/>
</dbReference>
<dbReference type="Gene3D" id="1.10.1420.10">
    <property type="match status" value="2"/>
</dbReference>
<dbReference type="Gene3D" id="6.10.140.430">
    <property type="match status" value="1"/>
</dbReference>
<dbReference type="Gene3D" id="3.40.1170.10">
    <property type="entry name" value="DNA repair protein MutS, domain I"/>
    <property type="match status" value="1"/>
</dbReference>
<dbReference type="Gene3D" id="3.30.420.110">
    <property type="entry name" value="MutS, connector domain"/>
    <property type="match status" value="1"/>
</dbReference>
<dbReference type="Gene3D" id="3.40.50.300">
    <property type="entry name" value="P-loop containing nucleotide triphosphate hydrolases"/>
    <property type="match status" value="1"/>
</dbReference>
<dbReference type="HAMAP" id="MF_00096">
    <property type="entry name" value="MutS"/>
    <property type="match status" value="1"/>
</dbReference>
<dbReference type="InterPro" id="IPR005748">
    <property type="entry name" value="DNA_mismatch_repair_MutS"/>
</dbReference>
<dbReference type="InterPro" id="IPR007695">
    <property type="entry name" value="DNA_mismatch_repair_MutS-lik_N"/>
</dbReference>
<dbReference type="InterPro" id="IPR017261">
    <property type="entry name" value="DNA_mismatch_repair_MutS/MSH"/>
</dbReference>
<dbReference type="InterPro" id="IPR000432">
    <property type="entry name" value="DNA_mismatch_repair_MutS_C"/>
</dbReference>
<dbReference type="InterPro" id="IPR007861">
    <property type="entry name" value="DNA_mismatch_repair_MutS_clamp"/>
</dbReference>
<dbReference type="InterPro" id="IPR007696">
    <property type="entry name" value="DNA_mismatch_repair_MutS_core"/>
</dbReference>
<dbReference type="InterPro" id="IPR016151">
    <property type="entry name" value="DNA_mismatch_repair_MutS_N"/>
</dbReference>
<dbReference type="InterPro" id="IPR036187">
    <property type="entry name" value="DNA_mismatch_repair_MutS_sf"/>
</dbReference>
<dbReference type="InterPro" id="IPR007860">
    <property type="entry name" value="DNA_mmatch_repair_MutS_con_dom"/>
</dbReference>
<dbReference type="InterPro" id="IPR045076">
    <property type="entry name" value="MutS"/>
</dbReference>
<dbReference type="InterPro" id="IPR036678">
    <property type="entry name" value="MutS_con_dom_sf"/>
</dbReference>
<dbReference type="InterPro" id="IPR027417">
    <property type="entry name" value="P-loop_NTPase"/>
</dbReference>
<dbReference type="NCBIfam" id="TIGR01070">
    <property type="entry name" value="mutS1"/>
    <property type="match status" value="1"/>
</dbReference>
<dbReference type="NCBIfam" id="NF003810">
    <property type="entry name" value="PRK05399.1"/>
    <property type="match status" value="1"/>
</dbReference>
<dbReference type="PANTHER" id="PTHR11361:SF34">
    <property type="entry name" value="DNA MISMATCH REPAIR PROTEIN MSH1, MITOCHONDRIAL"/>
    <property type="match status" value="1"/>
</dbReference>
<dbReference type="PANTHER" id="PTHR11361">
    <property type="entry name" value="DNA MISMATCH REPAIR PROTEIN MUTS FAMILY MEMBER"/>
    <property type="match status" value="1"/>
</dbReference>
<dbReference type="Pfam" id="PF01624">
    <property type="entry name" value="MutS_I"/>
    <property type="match status" value="1"/>
</dbReference>
<dbReference type="Pfam" id="PF05188">
    <property type="entry name" value="MutS_II"/>
    <property type="match status" value="1"/>
</dbReference>
<dbReference type="Pfam" id="PF05192">
    <property type="entry name" value="MutS_III"/>
    <property type="match status" value="1"/>
</dbReference>
<dbReference type="Pfam" id="PF05190">
    <property type="entry name" value="MutS_IV"/>
    <property type="match status" value="1"/>
</dbReference>
<dbReference type="Pfam" id="PF00488">
    <property type="entry name" value="MutS_V"/>
    <property type="match status" value="1"/>
</dbReference>
<dbReference type="PIRSF" id="PIRSF037677">
    <property type="entry name" value="DNA_mis_repair_Msh6"/>
    <property type="match status" value="1"/>
</dbReference>
<dbReference type="SMART" id="SM00534">
    <property type="entry name" value="MUTSac"/>
    <property type="match status" value="1"/>
</dbReference>
<dbReference type="SMART" id="SM00533">
    <property type="entry name" value="MUTSd"/>
    <property type="match status" value="1"/>
</dbReference>
<dbReference type="SUPFAM" id="SSF55271">
    <property type="entry name" value="DNA repair protein MutS, domain I"/>
    <property type="match status" value="1"/>
</dbReference>
<dbReference type="SUPFAM" id="SSF53150">
    <property type="entry name" value="DNA repair protein MutS, domain II"/>
    <property type="match status" value="1"/>
</dbReference>
<dbReference type="SUPFAM" id="SSF48334">
    <property type="entry name" value="DNA repair protein MutS, domain III"/>
    <property type="match status" value="1"/>
</dbReference>
<dbReference type="SUPFAM" id="SSF52540">
    <property type="entry name" value="P-loop containing nucleoside triphosphate hydrolases"/>
    <property type="match status" value="1"/>
</dbReference>
<dbReference type="PROSITE" id="PS00486">
    <property type="entry name" value="DNA_MISMATCH_REPAIR_2"/>
    <property type="match status" value="1"/>
</dbReference>
<gene>
    <name evidence="1" type="primary">mutS</name>
    <name type="ordered locus">CKO_04095</name>
</gene>
<proteinExistence type="inferred from homology"/>
<organism>
    <name type="scientific">Citrobacter koseri (strain ATCC BAA-895 / CDC 4225-83 / SGSC4696)</name>
    <dbReference type="NCBI Taxonomy" id="290338"/>
    <lineage>
        <taxon>Bacteria</taxon>
        <taxon>Pseudomonadati</taxon>
        <taxon>Pseudomonadota</taxon>
        <taxon>Gammaproteobacteria</taxon>
        <taxon>Enterobacterales</taxon>
        <taxon>Enterobacteriaceae</taxon>
        <taxon>Citrobacter</taxon>
    </lineage>
</organism>
<accession>A8ANU8</accession>
<protein>
    <recommendedName>
        <fullName evidence="1">DNA mismatch repair protein MutS</fullName>
    </recommendedName>
</protein>
<comment type="function">
    <text evidence="1">This protein is involved in the repair of mismatches in DNA. It is possible that it carries out the mismatch recognition step. This protein has a weak ATPase activity.</text>
</comment>
<comment type="similarity">
    <text evidence="1">Belongs to the DNA mismatch repair MutS family.</text>
</comment>
<evidence type="ECO:0000255" key="1">
    <source>
        <dbReference type="HAMAP-Rule" id="MF_00096"/>
    </source>
</evidence>
<name>MUTS_CITK8</name>
<feature type="chain" id="PRO_1000071273" description="DNA mismatch repair protein MutS">
    <location>
        <begin position="1"/>
        <end position="853"/>
    </location>
</feature>
<feature type="binding site" evidence="1">
    <location>
        <begin position="614"/>
        <end position="621"/>
    </location>
    <ligand>
        <name>ATP</name>
        <dbReference type="ChEBI" id="CHEBI:30616"/>
    </ligand>
</feature>